<protein>
    <recommendedName>
        <fullName evidence="1">NADPH-dependent 7-cyano-7-deazaguanine reductase</fullName>
        <ecNumber evidence="1">1.7.1.13</ecNumber>
    </recommendedName>
    <alternativeName>
        <fullName evidence="1">7-cyano-7-carbaguanine reductase</fullName>
    </alternativeName>
    <alternativeName>
        <fullName evidence="1">NADPH-dependent nitrile oxidoreductase</fullName>
    </alternativeName>
    <alternativeName>
        <fullName evidence="1">PreQ(0) reductase</fullName>
    </alternativeName>
</protein>
<organism>
    <name type="scientific">Methylocella silvestris (strain DSM 15510 / CIP 108128 / LMG 27833 / NCIMB 13906 / BL2)</name>
    <dbReference type="NCBI Taxonomy" id="395965"/>
    <lineage>
        <taxon>Bacteria</taxon>
        <taxon>Pseudomonadati</taxon>
        <taxon>Pseudomonadota</taxon>
        <taxon>Alphaproteobacteria</taxon>
        <taxon>Hyphomicrobiales</taxon>
        <taxon>Beijerinckiaceae</taxon>
        <taxon>Methylocella</taxon>
    </lineage>
</organism>
<accession>B8EJT0</accession>
<dbReference type="EC" id="1.7.1.13" evidence="1"/>
<dbReference type="EMBL" id="CP001280">
    <property type="protein sequence ID" value="ACK49484.1"/>
    <property type="molecule type" value="Genomic_DNA"/>
</dbReference>
<dbReference type="RefSeq" id="WP_012589554.1">
    <property type="nucleotide sequence ID" value="NC_011666.1"/>
</dbReference>
<dbReference type="SMR" id="B8EJT0"/>
<dbReference type="STRING" id="395965.Msil_0512"/>
<dbReference type="KEGG" id="msl:Msil_0512"/>
<dbReference type="eggNOG" id="COG0780">
    <property type="taxonomic scope" value="Bacteria"/>
</dbReference>
<dbReference type="HOGENOM" id="CLU_102489_0_1_5"/>
<dbReference type="OrthoDB" id="9789995at2"/>
<dbReference type="UniPathway" id="UPA00392"/>
<dbReference type="Proteomes" id="UP000002257">
    <property type="component" value="Chromosome"/>
</dbReference>
<dbReference type="GO" id="GO:0005737">
    <property type="term" value="C:cytoplasm"/>
    <property type="evidence" value="ECO:0007669"/>
    <property type="project" value="UniProtKB-SubCell"/>
</dbReference>
<dbReference type="GO" id="GO:0033739">
    <property type="term" value="F:preQ1 synthase activity"/>
    <property type="evidence" value="ECO:0007669"/>
    <property type="project" value="UniProtKB-UniRule"/>
</dbReference>
<dbReference type="GO" id="GO:0008616">
    <property type="term" value="P:queuosine biosynthetic process"/>
    <property type="evidence" value="ECO:0007669"/>
    <property type="project" value="UniProtKB-UniRule"/>
</dbReference>
<dbReference type="GO" id="GO:0006400">
    <property type="term" value="P:tRNA modification"/>
    <property type="evidence" value="ECO:0007669"/>
    <property type="project" value="UniProtKB-UniRule"/>
</dbReference>
<dbReference type="Gene3D" id="3.30.1130.10">
    <property type="match status" value="1"/>
</dbReference>
<dbReference type="HAMAP" id="MF_00818">
    <property type="entry name" value="QueF_type1"/>
    <property type="match status" value="1"/>
</dbReference>
<dbReference type="InterPro" id="IPR043133">
    <property type="entry name" value="GTP-CH-I_C/QueF"/>
</dbReference>
<dbReference type="InterPro" id="IPR050084">
    <property type="entry name" value="NADPH_dep_7-cyano-7-deazaG_red"/>
</dbReference>
<dbReference type="InterPro" id="IPR029500">
    <property type="entry name" value="QueF"/>
</dbReference>
<dbReference type="InterPro" id="IPR016856">
    <property type="entry name" value="QueF_type1"/>
</dbReference>
<dbReference type="NCBIfam" id="TIGR03139">
    <property type="entry name" value="QueF-II"/>
    <property type="match status" value="1"/>
</dbReference>
<dbReference type="PANTHER" id="PTHR34354">
    <property type="entry name" value="NADPH-DEPENDENT 7-CYANO-7-DEAZAGUANINE REDUCTASE"/>
    <property type="match status" value="1"/>
</dbReference>
<dbReference type="PANTHER" id="PTHR34354:SF1">
    <property type="entry name" value="NADPH-DEPENDENT 7-CYANO-7-DEAZAGUANINE REDUCTASE"/>
    <property type="match status" value="1"/>
</dbReference>
<dbReference type="Pfam" id="PF14489">
    <property type="entry name" value="QueF"/>
    <property type="match status" value="1"/>
</dbReference>
<dbReference type="SUPFAM" id="SSF55620">
    <property type="entry name" value="Tetrahydrobiopterin biosynthesis enzymes-like"/>
    <property type="match status" value="1"/>
</dbReference>
<evidence type="ECO:0000255" key="1">
    <source>
        <dbReference type="HAMAP-Rule" id="MF_00818"/>
    </source>
</evidence>
<evidence type="ECO:0000256" key="2">
    <source>
        <dbReference type="SAM" id="MobiDB-lite"/>
    </source>
</evidence>
<proteinExistence type="inferred from homology"/>
<sequence>MVKIHDGASQLGANVAAPRSPEEATLERVANPHEEALYLARFTAPEFTSLCPVTGQPDFALLVIDYAPDKWIVESKSLKLYLGSFRNRGAFHEDCTVRIGKDLVAVLAPRWLRIGGYWYPRGGMPIDVFWSTGAPPPGLWLPDQGVPPYRGRG</sequence>
<keyword id="KW-0963">Cytoplasm</keyword>
<keyword id="KW-0521">NADP</keyword>
<keyword id="KW-0560">Oxidoreductase</keyword>
<keyword id="KW-0671">Queuosine biosynthesis</keyword>
<keyword id="KW-1185">Reference proteome</keyword>
<gene>
    <name evidence="1" type="primary">queF</name>
    <name type="ordered locus">Msil_0512</name>
</gene>
<comment type="function">
    <text evidence="1">Catalyzes the NADPH-dependent reduction of 7-cyano-7-deazaguanine (preQ0) to 7-aminomethyl-7-deazaguanine (preQ1).</text>
</comment>
<comment type="catalytic activity">
    <reaction evidence="1">
        <text>7-aminomethyl-7-carbaguanine + 2 NADP(+) = 7-cyano-7-deazaguanine + 2 NADPH + 3 H(+)</text>
        <dbReference type="Rhea" id="RHEA:13409"/>
        <dbReference type="ChEBI" id="CHEBI:15378"/>
        <dbReference type="ChEBI" id="CHEBI:45075"/>
        <dbReference type="ChEBI" id="CHEBI:57783"/>
        <dbReference type="ChEBI" id="CHEBI:58349"/>
        <dbReference type="ChEBI" id="CHEBI:58703"/>
        <dbReference type="EC" id="1.7.1.13"/>
    </reaction>
</comment>
<comment type="pathway">
    <text evidence="1">tRNA modification; tRNA-queuosine biosynthesis.</text>
</comment>
<comment type="subcellular location">
    <subcellularLocation>
        <location evidence="1">Cytoplasm</location>
    </subcellularLocation>
</comment>
<comment type="similarity">
    <text evidence="1">Belongs to the GTP cyclohydrolase I family. QueF type 1 subfamily.</text>
</comment>
<feature type="chain" id="PRO_1000213095" description="NADPH-dependent 7-cyano-7-deazaguanine reductase">
    <location>
        <begin position="1"/>
        <end position="153"/>
    </location>
</feature>
<feature type="region of interest" description="Disordered" evidence="2">
    <location>
        <begin position="1"/>
        <end position="26"/>
    </location>
</feature>
<feature type="active site" description="Thioimide intermediate" evidence="1">
    <location>
        <position position="51"/>
    </location>
</feature>
<feature type="active site" description="Proton donor" evidence="1">
    <location>
        <position position="58"/>
    </location>
</feature>
<feature type="binding site" evidence="1">
    <location>
        <begin position="73"/>
        <end position="75"/>
    </location>
    <ligand>
        <name>substrate</name>
    </ligand>
</feature>
<feature type="binding site" evidence="1">
    <location>
        <begin position="92"/>
        <end position="93"/>
    </location>
    <ligand>
        <name>substrate</name>
    </ligand>
</feature>
<reference key="1">
    <citation type="journal article" date="2010" name="J. Bacteriol.">
        <title>Complete genome sequence of the aerobic facultative methanotroph Methylocella silvestris BL2.</title>
        <authorList>
            <person name="Chen Y."/>
            <person name="Crombie A."/>
            <person name="Rahman M.T."/>
            <person name="Dedysh S.N."/>
            <person name="Liesack W."/>
            <person name="Stott M.B."/>
            <person name="Alam M."/>
            <person name="Theisen A.R."/>
            <person name="Murrell J.C."/>
            <person name="Dunfield P.F."/>
        </authorList>
    </citation>
    <scope>NUCLEOTIDE SEQUENCE [LARGE SCALE GENOMIC DNA]</scope>
    <source>
        <strain>DSM 15510 / CIP 108128 / LMG 27833 / NCIMB 13906 / BL2</strain>
    </source>
</reference>
<name>QUEF_METSB</name>